<keyword id="KW-0106">Calcium</keyword>
<keyword id="KW-0963">Cytoplasm</keyword>
<keyword id="KW-0206">Cytoskeleton</keyword>
<keyword id="KW-0479">Metal-binding</keyword>
<keyword id="KW-0505">Motor protein</keyword>
<keyword id="KW-0518">Myosin</keyword>
<keyword id="KW-0597">Phosphoprotein</keyword>
<keyword id="KW-1185">Reference proteome</keyword>
<keyword id="KW-0677">Repeat</keyword>
<reference key="1">
    <citation type="journal article" date="1998" name="Science">
        <title>Genome sequence of the nematode C. elegans: a platform for investigating biology.</title>
        <authorList>
            <consortium name="The C. elegans sequencing consortium"/>
        </authorList>
    </citation>
    <scope>NUCLEOTIDE SEQUENCE [LARGE SCALE GENOMIC DNA]</scope>
    <source>
        <strain>Bristol N2</strain>
    </source>
</reference>
<reference key="2">
    <citation type="journal article" date="1999" name="J. Cell Biol.">
        <title>The nonmuscle myosin regulatory light chain gene mlc-4 is required for cytokinesis, anterior-posterior polarity, and body morphology during Caenorhabditis elegans embryogenesis.</title>
        <authorList>
            <person name="Shelton C.A."/>
            <person name="Carter J.C."/>
            <person name="Ellis G.C."/>
            <person name="Bowerman B."/>
        </authorList>
    </citation>
    <scope>FUNCTION</scope>
    <scope>TISSUE SPECIFICITY</scope>
    <scope>DEVELOPMENTAL STAGE</scope>
    <scope>DISRUPTION PHENOTYPE</scope>
</reference>
<reference key="3">
    <citation type="journal article" date="2009" name="Development">
        <title>Myosin II regulation during C. elegans embryonic elongation: LET-502/ROCK, MRCK-1 and PAK-1, three kinases with different roles.</title>
        <authorList>
            <person name="Gally C."/>
            <person name="Wissler F."/>
            <person name="Zahreddine H."/>
            <person name="Quintin S."/>
            <person name="Landmann F."/>
            <person name="Labouesse M."/>
        </authorList>
    </citation>
    <scope>FUNCTION</scope>
    <scope>SUBCELLULAR LOCATION</scope>
    <scope>PHOSPHORYLATION AT THR-17 AND SER-18</scope>
    <scope>MUTAGENESIS OF THR-17 AND SER-18</scope>
</reference>
<accession>Q09510</accession>
<sequence length="172" mass="19940">MASRKTVNRRQRPQRATSNVFAMFDQAQIQEFKEAFNMIDQNRDGFIDQEDLKDMFASLGKEVTEQFIDSMINEAPGAQPINFTMFLTLFGEKLTGTDPEEVIRNAFQCFDEDNSGKLNEEHLRELLTTMGERYSEEQVDELFRDAPIKGGQFDYVEFTRMLKHGTKDKDEA</sequence>
<proteinExistence type="evidence at protein level"/>
<protein>
    <recommendedName>
        <fullName evidence="5">Myosin regulatory light chain</fullName>
    </recommendedName>
    <alternativeName>
        <fullName evidence="5">Non-muscle myosin regulatory light chain</fullName>
        <shortName evidence="5">nmRLC</shortName>
    </alternativeName>
</protein>
<gene>
    <name evidence="8" type="primary">mlc-4</name>
    <name evidence="8" type="ORF">C56G7.1</name>
</gene>
<dbReference type="EMBL" id="Z46793">
    <property type="protein sequence ID" value="CAA86772.1"/>
    <property type="molecule type" value="Genomic_DNA"/>
</dbReference>
<dbReference type="EMBL" id="Z34801">
    <property type="protein sequence ID" value="CAA86772.1"/>
    <property type="status" value="JOINED"/>
    <property type="molecule type" value="Genomic_DNA"/>
</dbReference>
<dbReference type="PIR" id="T20273">
    <property type="entry name" value="T20273"/>
</dbReference>
<dbReference type="RefSeq" id="NP_497700.1">
    <property type="nucleotide sequence ID" value="NM_065299.7"/>
</dbReference>
<dbReference type="SMR" id="Q09510"/>
<dbReference type="BioGRID" id="40682">
    <property type="interactions" value="10"/>
</dbReference>
<dbReference type="DIP" id="DIP-25307N"/>
<dbReference type="FunCoup" id="Q09510">
    <property type="interactions" value="1000"/>
</dbReference>
<dbReference type="IntAct" id="Q09510">
    <property type="interactions" value="1"/>
</dbReference>
<dbReference type="STRING" id="6239.C56G7.1.1"/>
<dbReference type="iPTMnet" id="Q09510"/>
<dbReference type="PaxDb" id="6239-C56G7.1"/>
<dbReference type="PeptideAtlas" id="Q09510"/>
<dbReference type="EnsemblMetazoa" id="C56G7.1.1">
    <property type="protein sequence ID" value="C56G7.1.1"/>
    <property type="gene ID" value="WBGene00003372"/>
</dbReference>
<dbReference type="GeneID" id="175440"/>
<dbReference type="KEGG" id="cel:CELE_C56G7.1"/>
<dbReference type="UCSC" id="C56G7.1.1">
    <property type="organism name" value="c. elegans"/>
</dbReference>
<dbReference type="AGR" id="WB:WBGene00003372"/>
<dbReference type="CTD" id="175440"/>
<dbReference type="WormBase" id="C56G7.1">
    <property type="protein sequence ID" value="CE01531"/>
    <property type="gene ID" value="WBGene00003372"/>
    <property type="gene designation" value="mlc-4"/>
</dbReference>
<dbReference type="eggNOG" id="KOG0031">
    <property type="taxonomic scope" value="Eukaryota"/>
</dbReference>
<dbReference type="GeneTree" id="ENSGT00940000155458"/>
<dbReference type="HOGENOM" id="CLU_061288_9_3_1"/>
<dbReference type="InParanoid" id="Q09510"/>
<dbReference type="OMA" id="GVNFTMF"/>
<dbReference type="OrthoDB" id="429467at2759"/>
<dbReference type="PhylomeDB" id="Q09510"/>
<dbReference type="Reactome" id="R-CEL-3928664">
    <property type="pathway name" value="Ephrin signaling"/>
</dbReference>
<dbReference type="Reactome" id="R-CEL-445355">
    <property type="pathway name" value="Smooth Muscle Contraction"/>
</dbReference>
<dbReference type="Reactome" id="R-CEL-5627123">
    <property type="pathway name" value="RHO GTPases activate PAKs"/>
</dbReference>
<dbReference type="SignaLink" id="Q09510"/>
<dbReference type="PRO" id="PR:Q09510"/>
<dbReference type="Proteomes" id="UP000001940">
    <property type="component" value="Chromosome III"/>
</dbReference>
<dbReference type="Bgee" id="WBGene00003372">
    <property type="expression patterns" value="Expressed in pharyngeal muscle cell (C elegans) and 4 other cell types or tissues"/>
</dbReference>
<dbReference type="GO" id="GO:0005737">
    <property type="term" value="C:cytoplasm"/>
    <property type="evidence" value="ECO:0000314"/>
    <property type="project" value="WormBase"/>
</dbReference>
<dbReference type="GO" id="GO:0031941">
    <property type="term" value="C:filamentous actin"/>
    <property type="evidence" value="ECO:0000314"/>
    <property type="project" value="WormBase"/>
</dbReference>
<dbReference type="GO" id="GO:0016460">
    <property type="term" value="C:myosin II complex"/>
    <property type="evidence" value="ECO:0000318"/>
    <property type="project" value="GO_Central"/>
</dbReference>
<dbReference type="GO" id="GO:0005509">
    <property type="term" value="F:calcium ion binding"/>
    <property type="evidence" value="ECO:0007669"/>
    <property type="project" value="InterPro"/>
</dbReference>
<dbReference type="GO" id="GO:0032036">
    <property type="term" value="F:myosin heavy chain binding"/>
    <property type="evidence" value="ECO:0000318"/>
    <property type="project" value="GO_Central"/>
</dbReference>
<dbReference type="GO" id="GO:0010172">
    <property type="term" value="P:embryonic body morphogenesis"/>
    <property type="evidence" value="ECO:0000315"/>
    <property type="project" value="WormBase"/>
</dbReference>
<dbReference type="GO" id="GO:0030010">
    <property type="term" value="P:establishment of cell polarity"/>
    <property type="evidence" value="ECO:0000315"/>
    <property type="project" value="WormBase"/>
</dbReference>
<dbReference type="GO" id="GO:0040011">
    <property type="term" value="P:locomotion"/>
    <property type="evidence" value="ECO:0000318"/>
    <property type="project" value="GO_Central"/>
</dbReference>
<dbReference type="GO" id="GO:0007110">
    <property type="term" value="P:meiosis I cytokinesis"/>
    <property type="evidence" value="ECO:0000315"/>
    <property type="project" value="WormBase"/>
</dbReference>
<dbReference type="GO" id="GO:0000281">
    <property type="term" value="P:mitotic cytokinesis"/>
    <property type="evidence" value="ECO:0000315"/>
    <property type="project" value="WormBase"/>
</dbReference>
<dbReference type="GO" id="GO:0002119">
    <property type="term" value="P:nematode larval development"/>
    <property type="evidence" value="ECO:0000315"/>
    <property type="project" value="WormBase"/>
</dbReference>
<dbReference type="GO" id="GO:0009791">
    <property type="term" value="P:post-embryonic development"/>
    <property type="evidence" value="ECO:0000318"/>
    <property type="project" value="GO_Central"/>
</dbReference>
<dbReference type="GO" id="GO:0008104">
    <property type="term" value="P:protein localization"/>
    <property type="evidence" value="ECO:0000315"/>
    <property type="project" value="WormBase"/>
</dbReference>
<dbReference type="CDD" id="cd00051">
    <property type="entry name" value="EFh"/>
    <property type="match status" value="2"/>
</dbReference>
<dbReference type="FunFam" id="1.10.238.10:FF:000007">
    <property type="entry name" value="Putative myosin regulatory light chain sqh"/>
    <property type="match status" value="1"/>
</dbReference>
<dbReference type="Gene3D" id="1.10.238.10">
    <property type="entry name" value="EF-hand"/>
    <property type="match status" value="2"/>
</dbReference>
<dbReference type="InterPro" id="IPR011992">
    <property type="entry name" value="EF-hand-dom_pair"/>
</dbReference>
<dbReference type="InterPro" id="IPR018247">
    <property type="entry name" value="EF_Hand_1_Ca_BS"/>
</dbReference>
<dbReference type="InterPro" id="IPR002048">
    <property type="entry name" value="EF_hand_dom"/>
</dbReference>
<dbReference type="InterPro" id="IPR050403">
    <property type="entry name" value="Myosin_RLC"/>
</dbReference>
<dbReference type="PANTHER" id="PTHR23049">
    <property type="entry name" value="MYOSIN REGULATORY LIGHT CHAIN 2"/>
    <property type="match status" value="1"/>
</dbReference>
<dbReference type="Pfam" id="PF13499">
    <property type="entry name" value="EF-hand_7"/>
    <property type="match status" value="2"/>
</dbReference>
<dbReference type="SMART" id="SM00054">
    <property type="entry name" value="EFh"/>
    <property type="match status" value="2"/>
</dbReference>
<dbReference type="SUPFAM" id="SSF47473">
    <property type="entry name" value="EF-hand"/>
    <property type="match status" value="1"/>
</dbReference>
<dbReference type="PROSITE" id="PS00018">
    <property type="entry name" value="EF_HAND_1"/>
    <property type="match status" value="1"/>
</dbReference>
<dbReference type="PROSITE" id="PS50222">
    <property type="entry name" value="EF_HAND_2"/>
    <property type="match status" value="3"/>
</dbReference>
<comment type="function">
    <text evidence="3 4">Regulates myosin II activity and organization during embryo elongation. May be involved in the organization of mlc-5 into bundles (PubMed:19675126). Required maternally for cytokinesis during meiosis and mitosis in the early embryo and for the establishment of embryonic anterior-posterior polarity (PubMed:10427096).</text>
</comment>
<comment type="subunit">
    <text evidence="1">Myosin is a hexamer of 2 heavy chains and 4 light chains (two regulatory light chains and two essential light chains).</text>
</comment>
<comment type="subcellular location">
    <subcellularLocation>
        <location evidence="4">Cytoplasm</location>
    </subcellularLocation>
    <subcellularLocation>
        <location evidence="4">Cytoplasm</location>
        <location evidence="4">Cytoskeleton</location>
    </subcellularLocation>
    <text evidence="4">Forms a filamentous structure which may co-localize with actin.</text>
</comment>
<comment type="tissue specificity">
    <text evidence="3">Expressed in the spermathecal and uterine walls. Weak expression in gonadal sheath and intestinal muscle. Not detected in vulval, pharyngeal or body wall muscles.</text>
</comment>
<comment type="developmental stage">
    <text evidence="3">Expressed at the bean stage in the lateral hypodermal seam cells and then throughout embryogenesis and into larval stages.</text>
</comment>
<comment type="PTM">
    <text evidence="7">May be phosphorylated by let-502 or/and pak-1 and dephosphorylated by mel-11 to regulate its activation and myosin II-mediated contraction.</text>
</comment>
<comment type="disruption phenotype">
    <text evidence="3">Arrest at the 2-fold embryonic stage which is associated with a defect in embryo elongation and failure of seam cells to elongate to a narrow morphology. No abnormalities in body wall or pharyngeal muscles and in the number of hypodermal cells.</text>
</comment>
<comment type="miscellaneous">
    <text evidence="1">This chain binds calcium.</text>
</comment>
<organism>
    <name type="scientific">Caenorhabditis elegans</name>
    <dbReference type="NCBI Taxonomy" id="6239"/>
    <lineage>
        <taxon>Eukaryota</taxon>
        <taxon>Metazoa</taxon>
        <taxon>Ecdysozoa</taxon>
        <taxon>Nematoda</taxon>
        <taxon>Chromadorea</taxon>
        <taxon>Rhabditida</taxon>
        <taxon>Rhabditina</taxon>
        <taxon>Rhabditomorpha</taxon>
        <taxon>Rhabditoidea</taxon>
        <taxon>Rhabditidae</taxon>
        <taxon>Peloderinae</taxon>
        <taxon>Caenorhabditis</taxon>
    </lineage>
</organism>
<feature type="chain" id="PRO_0000198762" description="Myosin regulatory light chain" evidence="6">
    <location>
        <begin position="1"/>
        <end position="172"/>
    </location>
</feature>
<feature type="domain" description="EF-hand 1" evidence="2">
    <location>
        <begin position="27"/>
        <end position="62"/>
    </location>
</feature>
<feature type="domain" description="EF-hand 2" evidence="2">
    <location>
        <begin position="98"/>
        <end position="133"/>
    </location>
</feature>
<feature type="domain" description="EF-hand 3" evidence="2">
    <location>
        <begin position="134"/>
        <end position="168"/>
    </location>
</feature>
<feature type="binding site" evidence="2">
    <location>
        <position position="40"/>
    </location>
    <ligand>
        <name>Ca(2+)</name>
        <dbReference type="ChEBI" id="CHEBI:29108"/>
    </ligand>
</feature>
<feature type="binding site" evidence="2">
    <location>
        <position position="42"/>
    </location>
    <ligand>
        <name>Ca(2+)</name>
        <dbReference type="ChEBI" id="CHEBI:29108"/>
    </ligand>
</feature>
<feature type="binding site" evidence="2">
    <location>
        <position position="44"/>
    </location>
    <ligand>
        <name>Ca(2+)</name>
        <dbReference type="ChEBI" id="CHEBI:29108"/>
    </ligand>
</feature>
<feature type="binding site" evidence="2">
    <location>
        <position position="51"/>
    </location>
    <ligand>
        <name>Ca(2+)</name>
        <dbReference type="ChEBI" id="CHEBI:29108"/>
    </ligand>
</feature>
<feature type="modified residue" description="Phosphothreonine" evidence="4">
    <location>
        <position position="17"/>
    </location>
</feature>
<feature type="modified residue" description="Phosphoserine" evidence="4">
    <location>
        <position position="18"/>
    </location>
</feature>
<feature type="mutagenesis site" description="Impaired embryo elongation." evidence="4">
    <original>TS</original>
    <variation>AA</variation>
    <location>
        <begin position="17"/>
        <end position="18"/>
    </location>
</feature>
<feature type="mutagenesis site" description="Phosphomimetic mutant which shows no defect in embryo elongation." evidence="4">
    <original>TS</original>
    <variation>DD</variation>
    <location>
        <begin position="17"/>
        <end position="18"/>
    </location>
</feature>
<feature type="mutagenesis site" description="Partial defect in embryo elongation." evidence="4">
    <original>T</original>
    <variation>A</variation>
    <location>
        <position position="17"/>
    </location>
</feature>
<feature type="mutagenesis site" description="Partial defect in embryo elongation." evidence="4">
    <original>S</original>
    <variation>A</variation>
    <location>
        <position position="18"/>
    </location>
</feature>
<evidence type="ECO:0000250" key="1"/>
<evidence type="ECO:0000255" key="2">
    <source>
        <dbReference type="PROSITE-ProRule" id="PRU00448"/>
    </source>
</evidence>
<evidence type="ECO:0000269" key="3">
    <source>
    </source>
</evidence>
<evidence type="ECO:0000269" key="4">
    <source>
    </source>
</evidence>
<evidence type="ECO:0000303" key="5">
    <source>
    </source>
</evidence>
<evidence type="ECO:0000305" key="6">
    <source>
    </source>
</evidence>
<evidence type="ECO:0000305" key="7">
    <source>
    </source>
</evidence>
<evidence type="ECO:0000312" key="8">
    <source>
        <dbReference type="WormBase" id="C56G7.1"/>
    </source>
</evidence>
<name>MLRH_CAEEL</name>